<protein>
    <recommendedName>
        <fullName evidence="1">Tol-Pal system protein TolB</fullName>
    </recommendedName>
</protein>
<name>TOLB_SALCH</name>
<reference key="1">
    <citation type="journal article" date="2005" name="Nucleic Acids Res.">
        <title>The genome sequence of Salmonella enterica serovar Choleraesuis, a highly invasive and resistant zoonotic pathogen.</title>
        <authorList>
            <person name="Chiu C.-H."/>
            <person name="Tang P."/>
            <person name="Chu C."/>
            <person name="Hu S."/>
            <person name="Bao Q."/>
            <person name="Yu J."/>
            <person name="Chou Y.-Y."/>
            <person name="Wang H.-S."/>
            <person name="Lee Y.-S."/>
        </authorList>
    </citation>
    <scope>NUCLEOTIDE SEQUENCE [LARGE SCALE GENOMIC DNA]</scope>
    <source>
        <strain>SC-B67</strain>
    </source>
</reference>
<keyword id="KW-0131">Cell cycle</keyword>
<keyword id="KW-0132">Cell division</keyword>
<keyword id="KW-0574">Periplasm</keyword>
<keyword id="KW-0732">Signal</keyword>
<evidence type="ECO:0000255" key="1">
    <source>
        <dbReference type="HAMAP-Rule" id="MF_00671"/>
    </source>
</evidence>
<organism>
    <name type="scientific">Salmonella choleraesuis (strain SC-B67)</name>
    <dbReference type="NCBI Taxonomy" id="321314"/>
    <lineage>
        <taxon>Bacteria</taxon>
        <taxon>Pseudomonadati</taxon>
        <taxon>Pseudomonadota</taxon>
        <taxon>Gammaproteobacteria</taxon>
        <taxon>Enterobacterales</taxon>
        <taxon>Enterobacteriaceae</taxon>
        <taxon>Salmonella</taxon>
    </lineage>
</organism>
<comment type="function">
    <text evidence="1">Part of the Tol-Pal system, which plays a role in outer membrane invagination during cell division and is important for maintaining outer membrane integrity. TolB occupies a key intermediary position in the Tol-Pal system because it communicates directly with both membrane-embedded components, Pal in the outer membrane and TolA in the inner membrane.</text>
</comment>
<comment type="subunit">
    <text evidence="1">The Tol-Pal system is composed of five core proteins: the inner membrane proteins TolA, TolQ and TolR, the periplasmic protein TolB and the outer membrane protein Pal. They form a network linking the inner and outer membranes and the peptidoglycan layer.</text>
</comment>
<comment type="subcellular location">
    <subcellularLocation>
        <location evidence="1">Periplasm</location>
    </subcellularLocation>
</comment>
<comment type="similarity">
    <text evidence="1">Belongs to the TolB family.</text>
</comment>
<sequence length="430" mass="46179">MKQALRVAFGFLMLWAAVLHAEVRIEITQGVDSARPIGVVPFKWAGPGAAPEDIGGIVAADLRNSGKFNPLDRSRLPQQPATAQEVQPTAWSALGIDAVVVGQVTPNPDGSYNIAYQLVDTGGAPGTVLAQNSYKVNKQWLRYAGHTASDEVFEKLTGIKGAFRTRIAYVVQTNGGQFPYELRVSDYDGYNQFVVHRSPQPLMSPAWSPDGSKLAYVTFESGRSALVIQTLANGSVRQVASFPRHNGAPAFSPDGTKLAFALSKTGSLNLYVMDLASGQIRQITDGRSNNTEPTWFPDSQTLAFTSDQAGRPQVYKMNINGGAAQRITWEGSQNQDADVSSDGKFMVMVSSNNGQQHIAKQDLVTGGVQVLSSTFLDETPSLAPNGTMVIYSSSQGMGSVLNLVSTDGRFKARLPATDGQVKSPAWSPYL</sequence>
<accession>Q57RK3</accession>
<gene>
    <name evidence="1" type="primary">tolB</name>
    <name type="ordered locus">SCH_0752</name>
</gene>
<feature type="signal peptide" evidence="1">
    <location>
        <begin position="1"/>
        <end position="21"/>
    </location>
</feature>
<feature type="chain" id="PRO_0000259087" description="Tol-Pal system protein TolB" evidence="1">
    <location>
        <begin position="22"/>
        <end position="430"/>
    </location>
</feature>
<dbReference type="EMBL" id="AE017220">
    <property type="protein sequence ID" value="AAX64658.1"/>
    <property type="molecule type" value="Genomic_DNA"/>
</dbReference>
<dbReference type="RefSeq" id="WP_001539503.1">
    <property type="nucleotide sequence ID" value="NC_006905.1"/>
</dbReference>
<dbReference type="SMR" id="Q57RK3"/>
<dbReference type="KEGG" id="sec:SCH_0752"/>
<dbReference type="HOGENOM" id="CLU_047123_0_0_6"/>
<dbReference type="Proteomes" id="UP000000538">
    <property type="component" value="Chromosome"/>
</dbReference>
<dbReference type="GO" id="GO:0042597">
    <property type="term" value="C:periplasmic space"/>
    <property type="evidence" value="ECO:0007669"/>
    <property type="project" value="UniProtKB-SubCell"/>
</dbReference>
<dbReference type="GO" id="GO:0051301">
    <property type="term" value="P:cell division"/>
    <property type="evidence" value="ECO:0007669"/>
    <property type="project" value="UniProtKB-UniRule"/>
</dbReference>
<dbReference type="GO" id="GO:0017038">
    <property type="term" value="P:protein import"/>
    <property type="evidence" value="ECO:0007669"/>
    <property type="project" value="InterPro"/>
</dbReference>
<dbReference type="FunFam" id="2.120.10.30:FF:000022">
    <property type="entry name" value="Tol-Pal system protein TolB"/>
    <property type="match status" value="1"/>
</dbReference>
<dbReference type="FunFam" id="3.40.50.10070:FF:000001">
    <property type="entry name" value="Tol-Pal system protein TolB"/>
    <property type="match status" value="1"/>
</dbReference>
<dbReference type="Gene3D" id="2.120.10.30">
    <property type="entry name" value="TolB, C-terminal domain"/>
    <property type="match status" value="1"/>
</dbReference>
<dbReference type="Gene3D" id="3.40.50.10070">
    <property type="entry name" value="TolB, N-terminal domain"/>
    <property type="match status" value="1"/>
</dbReference>
<dbReference type="HAMAP" id="MF_00671">
    <property type="entry name" value="TolB"/>
    <property type="match status" value="1"/>
</dbReference>
<dbReference type="InterPro" id="IPR011042">
    <property type="entry name" value="6-blade_b-propeller_TolB-like"/>
</dbReference>
<dbReference type="InterPro" id="IPR011659">
    <property type="entry name" value="PD40"/>
</dbReference>
<dbReference type="InterPro" id="IPR014167">
    <property type="entry name" value="Tol-Pal_TolB"/>
</dbReference>
<dbReference type="InterPro" id="IPR007195">
    <property type="entry name" value="TolB_N"/>
</dbReference>
<dbReference type="NCBIfam" id="TIGR02800">
    <property type="entry name" value="propeller_TolB"/>
    <property type="match status" value="1"/>
</dbReference>
<dbReference type="PANTHER" id="PTHR36842:SF1">
    <property type="entry name" value="PROTEIN TOLB"/>
    <property type="match status" value="1"/>
</dbReference>
<dbReference type="PANTHER" id="PTHR36842">
    <property type="entry name" value="PROTEIN TOLB HOMOLOG"/>
    <property type="match status" value="1"/>
</dbReference>
<dbReference type="Pfam" id="PF07676">
    <property type="entry name" value="PD40"/>
    <property type="match status" value="4"/>
</dbReference>
<dbReference type="Pfam" id="PF04052">
    <property type="entry name" value="TolB_N"/>
    <property type="match status" value="1"/>
</dbReference>
<dbReference type="SUPFAM" id="SSF52964">
    <property type="entry name" value="TolB, N-terminal domain"/>
    <property type="match status" value="1"/>
</dbReference>
<dbReference type="SUPFAM" id="SSF69304">
    <property type="entry name" value="Tricorn protease N-terminal domain"/>
    <property type="match status" value="1"/>
</dbReference>
<proteinExistence type="inferred from homology"/>